<reference key="1">
    <citation type="journal article" date="2006" name="Genetics">
        <title>Structural diversity and differential transcription of the patatin multicopy gene family during potato tuber development.</title>
        <authorList>
            <person name="Stupar R.M."/>
            <person name="Beaubien K.A."/>
            <person name="Jin W."/>
            <person name="Song J."/>
            <person name="Lee M.-K."/>
            <person name="Wu C."/>
            <person name="Zhang H.-B."/>
            <person name="Han B."/>
            <person name="Jiang J."/>
        </authorList>
    </citation>
    <scope>NUCLEOTIDE SEQUENCE [MRNA]</scope>
    <scope>DEVELOPMENTAL STAGE</scope>
    <scope>TISSUE SPECIFICITY</scope>
    <source>
        <strain>cv. Kennebec</strain>
    </source>
</reference>
<name>PATJ1_SOLTU</name>
<sequence>MATTKSFLILIVMILATTSSTFASLEEMVTVLSIDGGGIKGIIPGTILEFLEGQLQKMDNNADARLADYFDVIGGTSTGGLLTAMITTPNENNRPFAAANEIVPFYFEHGPHIFNSSTGQFFGPKYDGKYLMQVLQEKLGETRVHQALTEVAISSFDIKTNKPVIFTKSNLAKSPELDAKMYDICYSTAAAPIYFPPHHFVTHTSNGATYEFNLVDGGVATVGDPALLSLSVATRLAQEDPAFSSIKSLDYKQMLLLSLGTGTNSEFDKTYTAEEAAKWGPLRWMLAIQQMTNAASSYMTDYYISTVFQARHSQNNYLRVQENALTGTTTEMDDASEANMELLVQVGETLLKKPVSKDSPETYEEALKRFAKLLSNRKKLRANKASY</sequence>
<protein>
    <recommendedName>
        <fullName>Patatin group J-1</fullName>
        <ecNumber>3.1.1.-</ecNumber>
    </recommendedName>
</protein>
<keyword id="KW-0175">Coiled coil</keyword>
<keyword id="KW-0325">Glycoprotein</keyword>
<keyword id="KW-0378">Hydrolase</keyword>
<keyword id="KW-0442">Lipid degradation</keyword>
<keyword id="KW-0443">Lipid metabolism</keyword>
<keyword id="KW-0611">Plant defense</keyword>
<keyword id="KW-1185">Reference proteome</keyword>
<keyword id="KW-0732">Signal</keyword>
<keyword id="KW-0758">Storage protein</keyword>
<keyword id="KW-0926">Vacuole</keyword>
<feature type="signal peptide" evidence="2">
    <location>
        <begin position="1"/>
        <end position="23"/>
    </location>
</feature>
<feature type="chain" id="PRO_0000296706" description="Patatin group J-1">
    <location>
        <begin position="24"/>
        <end position="387"/>
    </location>
</feature>
<feature type="domain" description="PNPLA" evidence="3">
    <location>
        <begin position="32"/>
        <end position="230"/>
    </location>
</feature>
<feature type="coiled-coil region" evidence="2">
    <location>
        <begin position="322"/>
        <end position="385"/>
    </location>
</feature>
<feature type="short sequence motif" description="GXGXXG" evidence="3">
    <location>
        <begin position="36"/>
        <end position="41"/>
    </location>
</feature>
<feature type="short sequence motif" description="GXSXG" evidence="3">
    <location>
        <begin position="75"/>
        <end position="79"/>
    </location>
</feature>
<feature type="short sequence motif" description="DGA/G" evidence="3">
    <location>
        <begin position="216"/>
        <end position="218"/>
    </location>
</feature>
<feature type="active site" description="Nucleophile" evidence="3">
    <location>
        <position position="77"/>
    </location>
</feature>
<feature type="active site" description="Proton acceptor" evidence="3">
    <location>
        <position position="216"/>
    </location>
</feature>
<feature type="glycosylation site" description="N-linked (GlcNAc...) asparagine" evidence="2">
    <location>
        <position position="115"/>
    </location>
</feature>
<dbReference type="EC" id="3.1.1.-"/>
<dbReference type="EMBL" id="DQ274484">
    <property type="protein sequence ID" value="ABC55684.1"/>
    <property type="molecule type" value="mRNA"/>
</dbReference>
<dbReference type="SMR" id="Q2MY54"/>
<dbReference type="InParanoid" id="Q2MY54"/>
<dbReference type="Proteomes" id="UP000011115">
    <property type="component" value="Unassembled WGS sequence"/>
</dbReference>
<dbReference type="ExpressionAtlas" id="Q2MY54">
    <property type="expression patterns" value="baseline"/>
</dbReference>
<dbReference type="GO" id="GO:0005773">
    <property type="term" value="C:vacuole"/>
    <property type="evidence" value="ECO:0007669"/>
    <property type="project" value="UniProtKB-SubCell"/>
</dbReference>
<dbReference type="GO" id="GO:0047372">
    <property type="term" value="F:monoacylglycerol lipase activity"/>
    <property type="evidence" value="ECO:0000318"/>
    <property type="project" value="GO_Central"/>
</dbReference>
<dbReference type="GO" id="GO:0045735">
    <property type="term" value="F:nutrient reservoir activity"/>
    <property type="evidence" value="ECO:0007669"/>
    <property type="project" value="UniProtKB-KW"/>
</dbReference>
<dbReference type="GO" id="GO:0004620">
    <property type="term" value="F:phospholipase activity"/>
    <property type="evidence" value="ECO:0000318"/>
    <property type="project" value="GO_Central"/>
</dbReference>
<dbReference type="GO" id="GO:0006952">
    <property type="term" value="P:defense response"/>
    <property type="evidence" value="ECO:0007669"/>
    <property type="project" value="UniProtKB-KW"/>
</dbReference>
<dbReference type="GO" id="GO:0016042">
    <property type="term" value="P:lipid catabolic process"/>
    <property type="evidence" value="ECO:0007669"/>
    <property type="project" value="UniProtKB-KW"/>
</dbReference>
<dbReference type="Gene3D" id="3.40.1090.10">
    <property type="entry name" value="Cytosolic phospholipase A2 catalytic domain"/>
    <property type="match status" value="1"/>
</dbReference>
<dbReference type="InterPro" id="IPR016035">
    <property type="entry name" value="Acyl_Trfase/lysoPLipase"/>
</dbReference>
<dbReference type="InterPro" id="IPR002641">
    <property type="entry name" value="PNPLA_dom"/>
</dbReference>
<dbReference type="PANTHER" id="PTHR32176:SF85">
    <property type="entry name" value="PATATIN GROUP D-2"/>
    <property type="match status" value="1"/>
</dbReference>
<dbReference type="PANTHER" id="PTHR32176">
    <property type="entry name" value="XYLOSE ISOMERASE"/>
    <property type="match status" value="1"/>
</dbReference>
<dbReference type="Pfam" id="PF01734">
    <property type="entry name" value="Patatin"/>
    <property type="match status" value="1"/>
</dbReference>
<dbReference type="SUPFAM" id="SSF52151">
    <property type="entry name" value="FabD/lysophospholipase-like"/>
    <property type="match status" value="1"/>
</dbReference>
<dbReference type="PROSITE" id="PS51635">
    <property type="entry name" value="PNPLA"/>
    <property type="match status" value="1"/>
</dbReference>
<accession>Q2MY54</accession>
<comment type="function">
    <text evidence="1">Probable lipolytic acyl hydrolase (LAH), an activity which is thought to be involved in the response of tubers to pathogens.</text>
</comment>
<comment type="subcellular location">
    <subcellularLocation>
        <location evidence="1">Vacuole</location>
    </subcellularLocation>
</comment>
<comment type="tissue specificity">
    <text evidence="4">Tuber.</text>
</comment>
<comment type="developmental stage">
    <text evidence="4">Accumulates progressively during tuber formation from stolon.</text>
</comment>
<comment type="domain">
    <text>The nitrogen atoms of the two glycine residues in the GGXR motif define the oxyanion hole, and stabilize the oxyanion that forms during the nucleophilic attack by the catalytic serine during substrate cleavage.</text>
</comment>
<comment type="miscellaneous">
    <text>Patatin have a dual role as a somatic storage protein and as an enzyme involved in host resistance.</text>
</comment>
<comment type="similarity">
    <text evidence="5">Belongs to the patatin family.</text>
</comment>
<proteinExistence type="evidence at transcript level"/>
<evidence type="ECO:0000250" key="1"/>
<evidence type="ECO:0000255" key="2"/>
<evidence type="ECO:0000255" key="3">
    <source>
        <dbReference type="PROSITE-ProRule" id="PRU01161"/>
    </source>
</evidence>
<evidence type="ECO:0000269" key="4">
    <source>
    </source>
</evidence>
<evidence type="ECO:0000305" key="5"/>
<organism>
    <name type="scientific">Solanum tuberosum</name>
    <name type="common">Potato</name>
    <dbReference type="NCBI Taxonomy" id="4113"/>
    <lineage>
        <taxon>Eukaryota</taxon>
        <taxon>Viridiplantae</taxon>
        <taxon>Streptophyta</taxon>
        <taxon>Embryophyta</taxon>
        <taxon>Tracheophyta</taxon>
        <taxon>Spermatophyta</taxon>
        <taxon>Magnoliopsida</taxon>
        <taxon>eudicotyledons</taxon>
        <taxon>Gunneridae</taxon>
        <taxon>Pentapetalae</taxon>
        <taxon>asterids</taxon>
        <taxon>lamiids</taxon>
        <taxon>Solanales</taxon>
        <taxon>Solanaceae</taxon>
        <taxon>Solanoideae</taxon>
        <taxon>Solaneae</taxon>
        <taxon>Solanum</taxon>
    </lineage>
</organism>